<sequence length="264" mass="28180">MKPTTISQLRRLKETGKKFATITAYDFSFAKLFEEEGIGVMLVGDSLGMTVQGHDSTLPVTVDDIAYHTRAVRRGAPHCLLLADLPFMAYATPEQAFENSAAVMRAGANMVKIEGGQWLADTVRMLTERAVPVCGHLGLTPQSVNIFGGYKVQGRDEAAAQTLLNDALALEAAGAQLLVLECVPVALAQRITNALSIPVIGIGAGNVTDGQILVMHDAFGITGGHIPKFAKNFLAEAGDMRAAVRQYIAEVESGAYPGEEHSFH</sequence>
<reference key="1">
    <citation type="journal article" date="2010" name="PLoS ONE">
        <title>Genome sequence of Cronobacter sakazakii BAA-894 and comparative genomic hybridization analysis with other Cronobacter species.</title>
        <authorList>
            <person name="Kucerova E."/>
            <person name="Clifton S.W."/>
            <person name="Xia X.Q."/>
            <person name="Long F."/>
            <person name="Porwollik S."/>
            <person name="Fulton L."/>
            <person name="Fronick C."/>
            <person name="Minx P."/>
            <person name="Kyung K."/>
            <person name="Warren W."/>
            <person name="Fulton R."/>
            <person name="Feng D."/>
            <person name="Wollam A."/>
            <person name="Shah N."/>
            <person name="Bhonagiri V."/>
            <person name="Nash W.E."/>
            <person name="Hallsworth-Pepin K."/>
            <person name="Wilson R.K."/>
            <person name="McClelland M."/>
            <person name="Forsythe S.J."/>
        </authorList>
    </citation>
    <scope>NUCLEOTIDE SEQUENCE [LARGE SCALE GENOMIC DNA]</scope>
    <source>
        <strain>ATCC BAA-894</strain>
    </source>
</reference>
<keyword id="KW-0963">Cytoplasm</keyword>
<keyword id="KW-0460">Magnesium</keyword>
<keyword id="KW-0479">Metal-binding</keyword>
<keyword id="KW-0566">Pantothenate biosynthesis</keyword>
<keyword id="KW-1185">Reference proteome</keyword>
<keyword id="KW-0808">Transferase</keyword>
<protein>
    <recommendedName>
        <fullName evidence="1">3-methyl-2-oxobutanoate hydroxymethyltransferase</fullName>
        <ecNumber evidence="1">2.1.2.11</ecNumber>
    </recommendedName>
    <alternativeName>
        <fullName evidence="1">Ketopantoate hydroxymethyltransferase</fullName>
        <shortName evidence="1">KPHMT</shortName>
    </alternativeName>
</protein>
<accession>A7MGP6</accession>
<comment type="function">
    <text evidence="1">Catalyzes the reversible reaction in which hydroxymethyl group from 5,10-methylenetetrahydrofolate is transferred onto alpha-ketoisovalerate to form ketopantoate.</text>
</comment>
<comment type="catalytic activity">
    <reaction evidence="1">
        <text>3-methyl-2-oxobutanoate + (6R)-5,10-methylene-5,6,7,8-tetrahydrofolate + H2O = 2-dehydropantoate + (6S)-5,6,7,8-tetrahydrofolate</text>
        <dbReference type="Rhea" id="RHEA:11824"/>
        <dbReference type="ChEBI" id="CHEBI:11561"/>
        <dbReference type="ChEBI" id="CHEBI:11851"/>
        <dbReference type="ChEBI" id="CHEBI:15377"/>
        <dbReference type="ChEBI" id="CHEBI:15636"/>
        <dbReference type="ChEBI" id="CHEBI:57453"/>
        <dbReference type="EC" id="2.1.2.11"/>
    </reaction>
</comment>
<comment type="cofactor">
    <cofactor evidence="1">
        <name>Mg(2+)</name>
        <dbReference type="ChEBI" id="CHEBI:18420"/>
    </cofactor>
    <text evidence="1">Binds 1 Mg(2+) ion per subunit.</text>
</comment>
<comment type="pathway">
    <text evidence="1">Cofactor biosynthesis; (R)-pantothenate biosynthesis; (R)-pantoate from 3-methyl-2-oxobutanoate: step 1/2.</text>
</comment>
<comment type="subunit">
    <text evidence="1">Homodecamer; pentamer of dimers.</text>
</comment>
<comment type="subcellular location">
    <subcellularLocation>
        <location evidence="1">Cytoplasm</location>
    </subcellularLocation>
</comment>
<comment type="similarity">
    <text evidence="1">Belongs to the PanB family.</text>
</comment>
<organism>
    <name type="scientific">Cronobacter sakazakii (strain ATCC BAA-894)</name>
    <name type="common">Enterobacter sakazakii</name>
    <dbReference type="NCBI Taxonomy" id="290339"/>
    <lineage>
        <taxon>Bacteria</taxon>
        <taxon>Pseudomonadati</taxon>
        <taxon>Pseudomonadota</taxon>
        <taxon>Gammaproteobacteria</taxon>
        <taxon>Enterobacterales</taxon>
        <taxon>Enterobacteriaceae</taxon>
        <taxon>Cronobacter</taxon>
    </lineage>
</organism>
<gene>
    <name evidence="1" type="primary">panB</name>
    <name type="ordered locus">ESA_03200</name>
</gene>
<proteinExistence type="inferred from homology"/>
<feature type="chain" id="PRO_1000011370" description="3-methyl-2-oxobutanoate hydroxymethyltransferase">
    <location>
        <begin position="1"/>
        <end position="264"/>
    </location>
</feature>
<feature type="active site" description="Proton acceptor" evidence="1">
    <location>
        <position position="181"/>
    </location>
</feature>
<feature type="binding site" evidence="1">
    <location>
        <begin position="45"/>
        <end position="46"/>
    </location>
    <ligand>
        <name>3-methyl-2-oxobutanoate</name>
        <dbReference type="ChEBI" id="CHEBI:11851"/>
    </ligand>
</feature>
<feature type="binding site" evidence="1">
    <location>
        <position position="45"/>
    </location>
    <ligand>
        <name>Mg(2+)</name>
        <dbReference type="ChEBI" id="CHEBI:18420"/>
    </ligand>
</feature>
<feature type="binding site" evidence="1">
    <location>
        <position position="84"/>
    </location>
    <ligand>
        <name>3-methyl-2-oxobutanoate</name>
        <dbReference type="ChEBI" id="CHEBI:11851"/>
    </ligand>
</feature>
<feature type="binding site" evidence="1">
    <location>
        <position position="84"/>
    </location>
    <ligand>
        <name>Mg(2+)</name>
        <dbReference type="ChEBI" id="CHEBI:18420"/>
    </ligand>
</feature>
<feature type="binding site" evidence="1">
    <location>
        <position position="112"/>
    </location>
    <ligand>
        <name>3-methyl-2-oxobutanoate</name>
        <dbReference type="ChEBI" id="CHEBI:11851"/>
    </ligand>
</feature>
<feature type="binding site" evidence="1">
    <location>
        <position position="114"/>
    </location>
    <ligand>
        <name>Mg(2+)</name>
        <dbReference type="ChEBI" id="CHEBI:18420"/>
    </ligand>
</feature>
<name>PANB_CROS8</name>
<dbReference type="EC" id="2.1.2.11" evidence="1"/>
<dbReference type="EMBL" id="CP000783">
    <property type="protein sequence ID" value="ABU78422.1"/>
    <property type="molecule type" value="Genomic_DNA"/>
</dbReference>
<dbReference type="RefSeq" id="WP_012125732.1">
    <property type="nucleotide sequence ID" value="NC_009778.1"/>
</dbReference>
<dbReference type="SMR" id="A7MGP6"/>
<dbReference type="GeneID" id="45716765"/>
<dbReference type="KEGG" id="esa:ESA_03200"/>
<dbReference type="HOGENOM" id="CLU_036645_1_0_6"/>
<dbReference type="UniPathway" id="UPA00028">
    <property type="reaction ID" value="UER00003"/>
</dbReference>
<dbReference type="Proteomes" id="UP000000260">
    <property type="component" value="Chromosome"/>
</dbReference>
<dbReference type="GO" id="GO:0005737">
    <property type="term" value="C:cytoplasm"/>
    <property type="evidence" value="ECO:0007669"/>
    <property type="project" value="UniProtKB-SubCell"/>
</dbReference>
<dbReference type="GO" id="GO:0003864">
    <property type="term" value="F:3-methyl-2-oxobutanoate hydroxymethyltransferase activity"/>
    <property type="evidence" value="ECO:0007669"/>
    <property type="project" value="UniProtKB-UniRule"/>
</dbReference>
<dbReference type="GO" id="GO:0000287">
    <property type="term" value="F:magnesium ion binding"/>
    <property type="evidence" value="ECO:0007669"/>
    <property type="project" value="TreeGrafter"/>
</dbReference>
<dbReference type="GO" id="GO:0015940">
    <property type="term" value="P:pantothenate biosynthetic process"/>
    <property type="evidence" value="ECO:0007669"/>
    <property type="project" value="UniProtKB-UniRule"/>
</dbReference>
<dbReference type="CDD" id="cd06557">
    <property type="entry name" value="KPHMT-like"/>
    <property type="match status" value="1"/>
</dbReference>
<dbReference type="FunFam" id="3.20.20.60:FF:000003">
    <property type="entry name" value="3-methyl-2-oxobutanoate hydroxymethyltransferase"/>
    <property type="match status" value="1"/>
</dbReference>
<dbReference type="Gene3D" id="3.20.20.60">
    <property type="entry name" value="Phosphoenolpyruvate-binding domains"/>
    <property type="match status" value="1"/>
</dbReference>
<dbReference type="HAMAP" id="MF_00156">
    <property type="entry name" value="PanB"/>
    <property type="match status" value="1"/>
</dbReference>
<dbReference type="InterPro" id="IPR003700">
    <property type="entry name" value="Pantoate_hydroxy_MeTrfase"/>
</dbReference>
<dbReference type="InterPro" id="IPR015813">
    <property type="entry name" value="Pyrv/PenolPyrv_kinase-like_dom"/>
</dbReference>
<dbReference type="InterPro" id="IPR040442">
    <property type="entry name" value="Pyrv_kinase-like_dom_sf"/>
</dbReference>
<dbReference type="NCBIfam" id="TIGR00222">
    <property type="entry name" value="panB"/>
    <property type="match status" value="1"/>
</dbReference>
<dbReference type="NCBIfam" id="NF001452">
    <property type="entry name" value="PRK00311.1"/>
    <property type="match status" value="1"/>
</dbReference>
<dbReference type="PANTHER" id="PTHR20881">
    <property type="entry name" value="3-METHYL-2-OXOBUTANOATE HYDROXYMETHYLTRANSFERASE"/>
    <property type="match status" value="1"/>
</dbReference>
<dbReference type="PANTHER" id="PTHR20881:SF0">
    <property type="entry name" value="3-METHYL-2-OXOBUTANOATE HYDROXYMETHYLTRANSFERASE"/>
    <property type="match status" value="1"/>
</dbReference>
<dbReference type="Pfam" id="PF02548">
    <property type="entry name" value="Pantoate_transf"/>
    <property type="match status" value="1"/>
</dbReference>
<dbReference type="PIRSF" id="PIRSF000388">
    <property type="entry name" value="Pantoate_hydroxy_MeTrfase"/>
    <property type="match status" value="1"/>
</dbReference>
<dbReference type="SUPFAM" id="SSF51621">
    <property type="entry name" value="Phosphoenolpyruvate/pyruvate domain"/>
    <property type="match status" value="1"/>
</dbReference>
<evidence type="ECO:0000255" key="1">
    <source>
        <dbReference type="HAMAP-Rule" id="MF_00156"/>
    </source>
</evidence>